<sequence>MESPSYKNLIKAEDAQKKAGKRLLSSEWYPGFHVTPLTGWMNDPNGLIFFKGEYHLFYQYYPFAPVWGPMHWGHAKSRDLVHWETLPVALAPGDSFDRDGCFSGCAVDNNGVLTLIYTGHIVLSNDSPDAIREVQCMATSIDGIHFQKEGIVLEKAPMPQVAHFRDPRVWKENDHWFMVVGYRTDDKKHQGIGHVALYRSENLKDWIFVKTLLGDNSQLPLGKRAFMWECPDFFSLGNRSVLMFSPQGLKASGYKNRNLFQNGYILGKWQAPQFTPETSFQELDYGHDFYAAQRFEAKDGRQILIAWFDMWENQKPSQRDGWAGCMTLPRKLDLIDNKIVMTPVREMEILRQSEKIESVVTLSDAEHPFTMDSPLQEIELIFDLEKSNAYQAGLALRCNGKGQETLLYIDRSQNRIILDRNRSGQNVKGIRSCPLPNTSKVRLHIFLDRSSIEIFVGDDQTQGLYSISSRIFPDKDSLKGRLFAIEGYAVFDSFKRWTLQDANLAAFSSDAC</sequence>
<comment type="catalytic activity">
    <reaction evidence="2">
        <text>Hydrolysis of terminal non-reducing beta-D-fructofuranoside residues in beta-D-fructofuranosides.</text>
        <dbReference type="EC" id="3.2.1.26"/>
    </reaction>
</comment>
<comment type="pathway">
    <text>Glycan biosynthesis; sucrose metabolism.</text>
</comment>
<comment type="subcellular location">
    <subcellularLocation>
        <location evidence="1">Cytoplasm</location>
    </subcellularLocation>
</comment>
<comment type="similarity">
    <text evidence="3">Belongs to the glycosyl hydrolase 32 family.</text>
</comment>
<name>SCR_ZYMMA</name>
<dbReference type="EC" id="3.2.1.26"/>
<dbReference type="EMBL" id="M62718">
    <property type="protein sequence ID" value="AAA27701.1"/>
    <property type="molecule type" value="Genomic_DNA"/>
</dbReference>
<dbReference type="EMBL" id="CP002850">
    <property type="protein sequence ID" value="AEH62209.1"/>
    <property type="molecule type" value="Genomic_DNA"/>
</dbReference>
<dbReference type="PIR" id="A37803">
    <property type="entry name" value="A37803"/>
</dbReference>
<dbReference type="RefSeq" id="WP_014500464.1">
    <property type="nucleotide sequence ID" value="NC_017262.1"/>
</dbReference>
<dbReference type="SMR" id="F8DVG5"/>
<dbReference type="CAZy" id="GH32">
    <property type="family name" value="Glycoside Hydrolase Family 32"/>
</dbReference>
<dbReference type="KEGG" id="zmm:Zmob_0361"/>
<dbReference type="eggNOG" id="COG1621">
    <property type="taxonomic scope" value="Bacteria"/>
</dbReference>
<dbReference type="HOGENOM" id="CLU_001528_7_0_5"/>
<dbReference type="OrthoDB" id="9801455at2"/>
<dbReference type="UniPathway" id="UPA00238"/>
<dbReference type="Proteomes" id="UP000001494">
    <property type="component" value="Chromosome"/>
</dbReference>
<dbReference type="GO" id="GO:0005737">
    <property type="term" value="C:cytoplasm"/>
    <property type="evidence" value="ECO:0007669"/>
    <property type="project" value="UniProtKB-SubCell"/>
</dbReference>
<dbReference type="GO" id="GO:0004564">
    <property type="term" value="F:beta-fructofuranosidase activity"/>
    <property type="evidence" value="ECO:0007669"/>
    <property type="project" value="UniProtKB-EC"/>
</dbReference>
<dbReference type="GO" id="GO:0005985">
    <property type="term" value="P:sucrose metabolic process"/>
    <property type="evidence" value="ECO:0007669"/>
    <property type="project" value="UniProtKB-UniPathway"/>
</dbReference>
<dbReference type="CDD" id="cd08996">
    <property type="entry name" value="GH32_FFase"/>
    <property type="match status" value="1"/>
</dbReference>
<dbReference type="Gene3D" id="2.60.120.560">
    <property type="entry name" value="Exo-inulinase, domain 1"/>
    <property type="match status" value="1"/>
</dbReference>
<dbReference type="Gene3D" id="2.115.10.20">
    <property type="entry name" value="Glycosyl hydrolase domain, family 43"/>
    <property type="match status" value="1"/>
</dbReference>
<dbReference type="InterPro" id="IPR013320">
    <property type="entry name" value="ConA-like_dom_sf"/>
</dbReference>
<dbReference type="InterPro" id="IPR051214">
    <property type="entry name" value="GH32_Enzymes"/>
</dbReference>
<dbReference type="InterPro" id="IPR001362">
    <property type="entry name" value="Glyco_hydro_32"/>
</dbReference>
<dbReference type="InterPro" id="IPR018053">
    <property type="entry name" value="Glyco_hydro_32_AS"/>
</dbReference>
<dbReference type="InterPro" id="IPR013189">
    <property type="entry name" value="Glyco_hydro_32_C"/>
</dbReference>
<dbReference type="InterPro" id="IPR013148">
    <property type="entry name" value="Glyco_hydro_32_N"/>
</dbReference>
<dbReference type="InterPro" id="IPR023296">
    <property type="entry name" value="Glyco_hydro_beta-prop_sf"/>
</dbReference>
<dbReference type="InterPro" id="IPR006232">
    <property type="entry name" value="Suc6P_hydrolase"/>
</dbReference>
<dbReference type="NCBIfam" id="TIGR01322">
    <property type="entry name" value="scrB_fam"/>
    <property type="match status" value="1"/>
</dbReference>
<dbReference type="PANTHER" id="PTHR43101">
    <property type="entry name" value="BETA-FRUCTOSIDASE"/>
    <property type="match status" value="1"/>
</dbReference>
<dbReference type="PANTHER" id="PTHR43101:SF1">
    <property type="entry name" value="BETA-FRUCTOSIDASE"/>
    <property type="match status" value="1"/>
</dbReference>
<dbReference type="Pfam" id="PF08244">
    <property type="entry name" value="Glyco_hydro_32C"/>
    <property type="match status" value="1"/>
</dbReference>
<dbReference type="Pfam" id="PF00251">
    <property type="entry name" value="Glyco_hydro_32N"/>
    <property type="match status" value="1"/>
</dbReference>
<dbReference type="SMART" id="SM00640">
    <property type="entry name" value="Glyco_32"/>
    <property type="match status" value="1"/>
</dbReference>
<dbReference type="SUPFAM" id="SSF75005">
    <property type="entry name" value="Arabinanase/levansucrase/invertase"/>
    <property type="match status" value="1"/>
</dbReference>
<dbReference type="SUPFAM" id="SSF49899">
    <property type="entry name" value="Concanavalin A-like lectins/glucanases"/>
    <property type="match status" value="1"/>
</dbReference>
<dbReference type="PROSITE" id="PS00609">
    <property type="entry name" value="GLYCOSYL_HYDROL_F32"/>
    <property type="match status" value="1"/>
</dbReference>
<feature type="chain" id="PRO_0000414237" description="Sucrose-6-phosphate hydrolase">
    <location>
        <begin position="1"/>
        <end position="512"/>
    </location>
</feature>
<feature type="active site" evidence="2">
    <location>
        <position position="43"/>
    </location>
</feature>
<feature type="binding site" evidence="1">
    <location>
        <begin position="40"/>
        <end position="43"/>
    </location>
    <ligand>
        <name>substrate</name>
    </ligand>
</feature>
<feature type="binding site" evidence="1">
    <location>
        <position position="59"/>
    </location>
    <ligand>
        <name>substrate</name>
    </ligand>
</feature>
<feature type="binding site" evidence="1">
    <location>
        <position position="67"/>
    </location>
    <ligand>
        <name>substrate</name>
    </ligand>
</feature>
<feature type="binding site" evidence="1">
    <location>
        <begin position="102"/>
        <end position="103"/>
    </location>
    <ligand>
        <name>substrate</name>
    </ligand>
</feature>
<feature type="binding site" evidence="1">
    <location>
        <begin position="165"/>
        <end position="166"/>
    </location>
    <ligand>
        <name>substrate</name>
    </ligand>
</feature>
<feature type="binding site" evidence="1">
    <location>
        <position position="229"/>
    </location>
    <ligand>
        <name>substrate</name>
    </ligand>
</feature>
<feature type="binding site" evidence="1">
    <location>
        <position position="311"/>
    </location>
    <ligand>
        <name>substrate</name>
    </ligand>
</feature>
<feature type="sequence conflict" description="In Ref. 1; AAA27701." evidence="3" ref="1">
    <original>G</original>
    <variation>S</variation>
    <location>
        <position position="39"/>
    </location>
</feature>
<feature type="sequence conflict" description="In Ref. 1; AAA27701." evidence="3" ref="1">
    <original>FEA</original>
    <variation>LKL</variation>
    <location>
        <begin position="295"/>
        <end position="297"/>
    </location>
</feature>
<feature type="sequence conflict" description="In Ref. 1; AAA27701." evidence="3" ref="1">
    <original>ILIAWF</original>
    <variation>NINCMV</variation>
    <location>
        <begin position="303"/>
        <end position="308"/>
    </location>
</feature>
<feature type="sequence conflict" description="In Ref. 1; AAA27701." evidence="3" ref="1">
    <original>ENQ</original>
    <variation>KS</variation>
    <location>
        <begin position="312"/>
        <end position="314"/>
    </location>
</feature>
<protein>
    <recommendedName>
        <fullName>Sucrose-6-phosphate hydrolase</fullName>
        <shortName>Sucrase</shortName>
        <ecNumber>3.2.1.26</ecNumber>
    </recommendedName>
    <alternativeName>
        <fullName>Invertase</fullName>
    </alternativeName>
</protein>
<reference key="1">
    <citation type="journal article" date="1990" name="J. Bacteriol.">
        <title>Cloning and sequencing of the sacA gene: characterization of a sucrase from Zymomonas mobilis.</title>
        <authorList>
            <person name="Gunasekaran P."/>
            <person name="Karunakaran T."/>
            <person name="Cami B."/>
            <person name="Mukundan A.G."/>
            <person name="Preziosi L."/>
            <person name="Baratti J."/>
        </authorList>
    </citation>
    <scope>NUCLEOTIDE SEQUENCE [GENOMIC DNA]</scope>
    <source>
        <strain>ATCC 10988 / DSM 424 / CCUG 17860 / LMG 404 / NCIMB 8938 / NRRL B-806 / ZM1</strain>
    </source>
</reference>
<reference key="2">
    <citation type="journal article" date="2011" name="J. Bacteriol.">
        <title>Genome sequence of the ethanol-producing Zymomonas mobilis subsp. mobilis lectotype strain ATCC 10988.</title>
        <authorList>
            <person name="Pappas K.M."/>
            <person name="Kouvelis V.N."/>
            <person name="Saunders E."/>
            <person name="Brettin T.S."/>
            <person name="Bruce D."/>
            <person name="Detter C."/>
            <person name="Balakireva M."/>
            <person name="Han C.S."/>
            <person name="Savvakis G."/>
            <person name="Kyrpides N.C."/>
            <person name="Typas M.A."/>
        </authorList>
    </citation>
    <scope>NUCLEOTIDE SEQUENCE [LARGE SCALE GENOMIC DNA]</scope>
    <source>
        <strain>ATCC 10988 / DSM 424 / CCUG 17860 / LMG 404 / NCIMB 8938 / NRRL B-806 / ZM1</strain>
    </source>
</reference>
<keyword id="KW-0119">Carbohydrate metabolism</keyword>
<keyword id="KW-0963">Cytoplasm</keyword>
<keyword id="KW-0326">Glycosidase</keyword>
<keyword id="KW-0378">Hydrolase</keyword>
<accession>F8DVG5</accession>
<accession>P22632</accession>
<accession>P35636</accession>
<accession>Q5NNZ4</accession>
<accession>Q84CM3</accession>
<proteinExistence type="inferred from homology"/>
<evidence type="ECO:0000250" key="1"/>
<evidence type="ECO:0000255" key="2">
    <source>
        <dbReference type="PROSITE-ProRule" id="PRU10067"/>
    </source>
</evidence>
<evidence type="ECO:0000305" key="3"/>
<gene>
    <name type="primary">sacA</name>
    <name type="synonym">invA</name>
    <name type="ordered locus">Zmob_0361</name>
</gene>
<organism>
    <name type="scientific">Zymomonas mobilis subsp. mobilis (strain ATCC 10988 / DSM 424 / LMG 404 / NCIMB 8938 / NRRL B-806 / ZM1)</name>
    <dbReference type="NCBI Taxonomy" id="555217"/>
    <lineage>
        <taxon>Bacteria</taxon>
        <taxon>Pseudomonadati</taxon>
        <taxon>Pseudomonadota</taxon>
        <taxon>Alphaproteobacteria</taxon>
        <taxon>Sphingomonadales</taxon>
        <taxon>Zymomonadaceae</taxon>
        <taxon>Zymomonas</taxon>
    </lineage>
</organism>